<protein>
    <recommendedName>
        <fullName evidence="2">Large ribosomal subunit protein uL2c</fullName>
    </recommendedName>
    <alternativeName>
        <fullName evidence="4">50S ribosomal protein L2, plastid</fullName>
    </alternativeName>
</protein>
<proteinExistence type="inferred from homology"/>
<evidence type="ECO:0000250" key="1"/>
<evidence type="ECO:0000255" key="2">
    <source>
        <dbReference type="HAMAP-Rule" id="MF_01320"/>
    </source>
</evidence>
<evidence type="ECO:0000256" key="3">
    <source>
        <dbReference type="SAM" id="MobiDB-lite"/>
    </source>
</evidence>
<evidence type="ECO:0000305" key="4"/>
<accession>B0YPR7</accession>
<reference key="1">
    <citation type="journal article" date="2008" name="Mol. Biol. Evol.">
        <title>Functional gene losses occur with minimal size reduction in the plastid genome of the parasitic liverwort Aneura mirabilis.</title>
        <authorList>
            <person name="Wickett N.J."/>
            <person name="Zhang Y."/>
            <person name="Hansen S.K."/>
            <person name="Roper J.M."/>
            <person name="Kuehl J.V."/>
            <person name="Plock S.A."/>
            <person name="Wolf P.G."/>
            <person name="dePamphilis C.W."/>
            <person name="Boore J.L."/>
            <person name="Goffinet B."/>
        </authorList>
    </citation>
    <scope>NUCLEOTIDE SEQUENCE [LARGE SCALE GENOMIC DNA]</scope>
</reference>
<comment type="subunit">
    <text evidence="1">Part of the 50S ribosomal subunit.</text>
</comment>
<comment type="subcellular location">
    <subcellularLocation>
        <location>Plastid</location>
    </subcellularLocation>
</comment>
<comment type="similarity">
    <text evidence="4">Belongs to the universal ribosomal protein uL2 family.</text>
</comment>
<organism>
    <name type="scientific">Aneura mirabilis</name>
    <name type="common">Parasitic liverwort</name>
    <name type="synonym">Cryptothallus mirabilis</name>
    <dbReference type="NCBI Taxonomy" id="280810"/>
    <lineage>
        <taxon>Eukaryota</taxon>
        <taxon>Viridiplantae</taxon>
        <taxon>Streptophyta</taxon>
        <taxon>Embryophyta</taxon>
        <taxon>Marchantiophyta</taxon>
        <taxon>Jungermanniopsida</taxon>
        <taxon>Metzgeriidae</taxon>
        <taxon>Metzgeriales</taxon>
        <taxon>Aneuraceae</taxon>
        <taxon>Aneura</taxon>
    </lineage>
</organism>
<name>RK2_ANEMR</name>
<feature type="chain" id="PRO_0000342535" description="Large ribosomal subunit protein uL2c">
    <location>
        <begin position="1"/>
        <end position="283"/>
    </location>
</feature>
<feature type="region of interest" description="Disordered" evidence="3">
    <location>
        <begin position="229"/>
        <end position="274"/>
    </location>
</feature>
<feature type="compositionally biased region" description="Basic residues" evidence="3">
    <location>
        <begin position="262"/>
        <end position="271"/>
    </location>
</feature>
<sequence length="283" mass="31353">MGIRSYQAYPPGTRDGSIVNSKEMVNSKEMIESEPQKVLVRGRHIARGRNHRGIITSRHRGGGHRRLYRMIDFRRDKRDVSGEIKTIEYDPNRNTCICLTNYGDGKKRYILYPHGIEIGNKIISGIEAPISIGNTSPLSTNMPLGASVHNIETRPGRGGQLVRAAGTTAKILAKEGQLVTLKLPSGEIRSLPQKCFATIGQIGNIDANNLKLGKAGSRRWLGKRPSVRGVVMNPIDHPHGGGEGKVPIGRKKPLTPWGHPALGRKSRKRRKYSDTLILRRRMA</sequence>
<keyword id="KW-0934">Plastid</keyword>
<keyword id="KW-0687">Ribonucleoprotein</keyword>
<keyword id="KW-0689">Ribosomal protein</keyword>
<dbReference type="EMBL" id="EU043314">
    <property type="protein sequence ID" value="ABS54515.1"/>
    <property type="molecule type" value="Genomic_DNA"/>
</dbReference>
<dbReference type="RefSeq" id="YP_001687253.1">
    <property type="nucleotide sequence ID" value="NC_010359.1"/>
</dbReference>
<dbReference type="SMR" id="B0YPR7"/>
<dbReference type="GeneID" id="5952186"/>
<dbReference type="GO" id="GO:0005762">
    <property type="term" value="C:mitochondrial large ribosomal subunit"/>
    <property type="evidence" value="ECO:0007669"/>
    <property type="project" value="TreeGrafter"/>
</dbReference>
<dbReference type="GO" id="GO:0009536">
    <property type="term" value="C:plastid"/>
    <property type="evidence" value="ECO:0007669"/>
    <property type="project" value="UniProtKB-SubCell"/>
</dbReference>
<dbReference type="GO" id="GO:0003723">
    <property type="term" value="F:RNA binding"/>
    <property type="evidence" value="ECO:0007669"/>
    <property type="project" value="InterPro"/>
</dbReference>
<dbReference type="GO" id="GO:0003735">
    <property type="term" value="F:structural constituent of ribosome"/>
    <property type="evidence" value="ECO:0007669"/>
    <property type="project" value="InterPro"/>
</dbReference>
<dbReference type="GO" id="GO:0016740">
    <property type="term" value="F:transferase activity"/>
    <property type="evidence" value="ECO:0007669"/>
    <property type="project" value="InterPro"/>
</dbReference>
<dbReference type="GO" id="GO:0032543">
    <property type="term" value="P:mitochondrial translation"/>
    <property type="evidence" value="ECO:0007669"/>
    <property type="project" value="TreeGrafter"/>
</dbReference>
<dbReference type="FunFam" id="2.30.30.30:FF:000001">
    <property type="entry name" value="50S ribosomal protein L2"/>
    <property type="match status" value="1"/>
</dbReference>
<dbReference type="FunFam" id="4.10.950.10:FF:000001">
    <property type="entry name" value="50S ribosomal protein L2"/>
    <property type="match status" value="1"/>
</dbReference>
<dbReference type="Gene3D" id="2.30.30.30">
    <property type="match status" value="1"/>
</dbReference>
<dbReference type="Gene3D" id="2.40.50.140">
    <property type="entry name" value="Nucleic acid-binding proteins"/>
    <property type="match status" value="1"/>
</dbReference>
<dbReference type="Gene3D" id="4.10.950.10">
    <property type="entry name" value="Ribosomal protein L2, domain 3"/>
    <property type="match status" value="1"/>
</dbReference>
<dbReference type="HAMAP" id="MF_01320_B">
    <property type="entry name" value="Ribosomal_uL2_B"/>
    <property type="match status" value="1"/>
</dbReference>
<dbReference type="InterPro" id="IPR012340">
    <property type="entry name" value="NA-bd_OB-fold"/>
</dbReference>
<dbReference type="InterPro" id="IPR014722">
    <property type="entry name" value="Rib_uL2_dom2"/>
</dbReference>
<dbReference type="InterPro" id="IPR002171">
    <property type="entry name" value="Ribosomal_uL2"/>
</dbReference>
<dbReference type="InterPro" id="IPR005880">
    <property type="entry name" value="Ribosomal_uL2_bac/org-type"/>
</dbReference>
<dbReference type="InterPro" id="IPR022669">
    <property type="entry name" value="Ribosomal_uL2_C"/>
</dbReference>
<dbReference type="InterPro" id="IPR022671">
    <property type="entry name" value="Ribosomal_uL2_CS"/>
</dbReference>
<dbReference type="InterPro" id="IPR014726">
    <property type="entry name" value="Ribosomal_uL2_dom3"/>
</dbReference>
<dbReference type="InterPro" id="IPR022666">
    <property type="entry name" value="Ribosomal_uL2_RNA-bd_dom"/>
</dbReference>
<dbReference type="InterPro" id="IPR008991">
    <property type="entry name" value="Translation_prot_SH3-like_sf"/>
</dbReference>
<dbReference type="NCBIfam" id="TIGR01171">
    <property type="entry name" value="rplB_bact"/>
    <property type="match status" value="1"/>
</dbReference>
<dbReference type="PANTHER" id="PTHR13691:SF5">
    <property type="entry name" value="LARGE RIBOSOMAL SUBUNIT PROTEIN UL2M"/>
    <property type="match status" value="1"/>
</dbReference>
<dbReference type="PANTHER" id="PTHR13691">
    <property type="entry name" value="RIBOSOMAL PROTEIN L2"/>
    <property type="match status" value="1"/>
</dbReference>
<dbReference type="Pfam" id="PF00181">
    <property type="entry name" value="Ribosomal_L2"/>
    <property type="match status" value="1"/>
</dbReference>
<dbReference type="Pfam" id="PF03947">
    <property type="entry name" value="Ribosomal_L2_C"/>
    <property type="match status" value="1"/>
</dbReference>
<dbReference type="PIRSF" id="PIRSF002158">
    <property type="entry name" value="Ribosomal_L2"/>
    <property type="match status" value="1"/>
</dbReference>
<dbReference type="SMART" id="SM01383">
    <property type="entry name" value="Ribosomal_L2"/>
    <property type="match status" value="1"/>
</dbReference>
<dbReference type="SMART" id="SM01382">
    <property type="entry name" value="Ribosomal_L2_C"/>
    <property type="match status" value="1"/>
</dbReference>
<dbReference type="SUPFAM" id="SSF50249">
    <property type="entry name" value="Nucleic acid-binding proteins"/>
    <property type="match status" value="1"/>
</dbReference>
<dbReference type="SUPFAM" id="SSF50104">
    <property type="entry name" value="Translation proteins SH3-like domain"/>
    <property type="match status" value="1"/>
</dbReference>
<dbReference type="PROSITE" id="PS00467">
    <property type="entry name" value="RIBOSOMAL_L2"/>
    <property type="match status" value="1"/>
</dbReference>
<geneLocation type="non-photosynthetic plastid"/>
<gene>
    <name type="primary">rpl2</name>
</gene>